<keyword id="KW-0175">Coiled coil</keyword>
<keyword id="KW-0238">DNA-binding</keyword>
<keyword id="KW-0479">Metal-binding</keyword>
<keyword id="KW-0539">Nucleus</keyword>
<keyword id="KW-0804">Transcription</keyword>
<keyword id="KW-0805">Transcription regulation</keyword>
<keyword id="KW-0862">Zinc</keyword>
<name>AGN11_PAEDI</name>
<accession>A0A411PQN2</accession>
<evidence type="ECO:0000255" key="1"/>
<evidence type="ECO:0000255" key="2">
    <source>
        <dbReference type="PROSITE-ProRule" id="PRU00227"/>
    </source>
</evidence>
<evidence type="ECO:0000256" key="3">
    <source>
        <dbReference type="SAM" id="MobiDB-lite"/>
    </source>
</evidence>
<evidence type="ECO:0000269" key="4">
    <source>
    </source>
</evidence>
<evidence type="ECO:0000303" key="5">
    <source>
    </source>
</evidence>
<reference key="1">
    <citation type="journal article" date="2019" name="Chem. Sci.">
        <title>Characterisation of the biosynthetic pathway to agnestins A and B reveals the reductive route to chrysophanol in fungi.</title>
        <authorList>
            <person name="Szwalbe A.J."/>
            <person name="Williams K."/>
            <person name="Song Z."/>
            <person name="de Mattos-Shipley K."/>
            <person name="Vincent J.L."/>
            <person name="Bailey A.M."/>
            <person name="Willis C.L."/>
            <person name="Cox R.J."/>
            <person name="Simpson T.J."/>
        </authorList>
    </citation>
    <scope>NUCLEOTIDE SEQUENCE [GENOMIC DNA]</scope>
    <scope>FUNCTION</scope>
    <source>
        <strain>K5013</strain>
    </source>
</reference>
<feature type="chain" id="PRO_0000449023" description="Agnestins biosynthesis cluster transcription factor AgnL11">
    <location>
        <begin position="1"/>
        <end position="684"/>
    </location>
</feature>
<feature type="DNA-binding region" description="Zn(2)-C6 fungal-type" evidence="2">
    <location>
        <begin position="25"/>
        <end position="51"/>
    </location>
</feature>
<feature type="region of interest" description="Disordered" evidence="3">
    <location>
        <begin position="601"/>
        <end position="644"/>
    </location>
</feature>
<feature type="coiled-coil region" evidence="1">
    <location>
        <begin position="76"/>
        <end position="103"/>
    </location>
</feature>
<feature type="compositionally biased region" description="Basic and acidic residues" evidence="3">
    <location>
        <begin position="606"/>
        <end position="619"/>
    </location>
</feature>
<organism>
    <name type="scientific">Paecilomyces divaricatus</name>
    <name type="common">Penicillium divaricatum</name>
    <dbReference type="NCBI Taxonomy" id="644132"/>
    <lineage>
        <taxon>Eukaryota</taxon>
        <taxon>Fungi</taxon>
        <taxon>Dikarya</taxon>
        <taxon>Ascomycota</taxon>
        <taxon>Pezizomycotina</taxon>
        <taxon>Eurotiomycetes</taxon>
        <taxon>Eurotiomycetidae</taxon>
        <taxon>Eurotiales</taxon>
        <taxon>Thermoascaceae</taxon>
        <taxon>Paecilomyces</taxon>
    </lineage>
</organism>
<comment type="function">
    <text evidence="4">Transcription factor that regulates the expression of the gene cluster that mediates the biosynthesis of agnestins, dihydroxy-xanthone metabolites.</text>
</comment>
<comment type="subcellular location">
    <subcellularLocation>
        <location evidence="2">Nucleus</location>
    </subcellularLocation>
</comment>
<proteinExistence type="inferred from homology"/>
<sequence>MKRSFDASHGQLEKQSRPRQVPTSCHFCRTKKLKCDRRFPCSNCRARRLSCVPFSDRSQAASLDLPGAGPSSTVSNEELSENINELKARLQRLEELISVNAEEKLDSKGPTSFVTSKGGYGEDVEASKSMNSLEMDAFEHQPLHSNSEERIAQLFASSFVSIIAPAIRLVIDQPTLSLLPSRKQAERLFDYFADQVVVFYYFIHVPTVRSMLDTVYTHLENKRQPQHDHLALLSTVFALSAYFGSSSSRFPFNGAEAKMLCYRWISVAQQALCAANYIVQPTVETLQSVILIAAYLVPNLGSMSIFRVLMASALQGALQLSLHQIDSPANQRRRQNATVNWVDIESKRRIWWHLASTDWIVSFMSGPRCGTYMIHPKQMTVDLPTNVDDQDIRPAGNYAQPLENAPTDMTFSILRTRISVIFREIVDAATDSGCLQEELPYDVVLAFDHRLHGIMADAPACFRTDPRSSRAPSRSPDLRLHRLIANALNRLHRPYLARGARDPKYSYSRMVCLRTARSVIELCKEMTGANEEFQHVKMWTIVHPLFNSVLVLVMDYCLNREEPRGDERKAEILEGFRLLEACQEDSALAQRGLQQMRQLLKGSASARKDKNPIHGDTDRATPPGSSNLPQHDKSSSSSPAPPVWPCLWTDPDLAPLETMDFDVDLDESQFEVLFRDFEGRHPMY</sequence>
<protein>
    <recommendedName>
        <fullName evidence="5">Agnestins biosynthesis cluster transcription factor AgnL11</fullName>
    </recommendedName>
    <alternativeName>
        <fullName evidence="5">Agnestins biosynthesis cluster protein L11</fullName>
    </alternativeName>
</protein>
<dbReference type="EMBL" id="MH898872">
    <property type="protein sequence ID" value="QBG38877.1"/>
    <property type="molecule type" value="Genomic_DNA"/>
</dbReference>
<dbReference type="GO" id="GO:0005634">
    <property type="term" value="C:nucleus"/>
    <property type="evidence" value="ECO:0007669"/>
    <property type="project" value="UniProtKB-SubCell"/>
</dbReference>
<dbReference type="GO" id="GO:0003677">
    <property type="term" value="F:DNA binding"/>
    <property type="evidence" value="ECO:0007669"/>
    <property type="project" value="UniProtKB-KW"/>
</dbReference>
<dbReference type="GO" id="GO:0000981">
    <property type="term" value="F:DNA-binding transcription factor activity, RNA polymerase II-specific"/>
    <property type="evidence" value="ECO:0007669"/>
    <property type="project" value="InterPro"/>
</dbReference>
<dbReference type="GO" id="GO:0008270">
    <property type="term" value="F:zinc ion binding"/>
    <property type="evidence" value="ECO:0007669"/>
    <property type="project" value="InterPro"/>
</dbReference>
<dbReference type="GO" id="GO:0006351">
    <property type="term" value="P:DNA-templated transcription"/>
    <property type="evidence" value="ECO:0007669"/>
    <property type="project" value="InterPro"/>
</dbReference>
<dbReference type="CDD" id="cd12148">
    <property type="entry name" value="fungal_TF_MHR"/>
    <property type="match status" value="1"/>
</dbReference>
<dbReference type="CDD" id="cd00067">
    <property type="entry name" value="GAL4"/>
    <property type="match status" value="1"/>
</dbReference>
<dbReference type="Gene3D" id="4.10.240.10">
    <property type="entry name" value="Zn(2)-C6 fungal-type DNA-binding domain"/>
    <property type="match status" value="1"/>
</dbReference>
<dbReference type="InterPro" id="IPR050613">
    <property type="entry name" value="Sec_Metabolite_Reg"/>
</dbReference>
<dbReference type="InterPro" id="IPR007219">
    <property type="entry name" value="Transcription_factor_dom_fun"/>
</dbReference>
<dbReference type="InterPro" id="IPR036864">
    <property type="entry name" value="Zn2-C6_fun-type_DNA-bd_sf"/>
</dbReference>
<dbReference type="InterPro" id="IPR001138">
    <property type="entry name" value="Zn2Cys6_DnaBD"/>
</dbReference>
<dbReference type="PANTHER" id="PTHR31001:SF90">
    <property type="entry name" value="CENTROMERE DNA-BINDING PROTEIN COMPLEX CBF3 SUBUNIT B"/>
    <property type="match status" value="1"/>
</dbReference>
<dbReference type="PANTHER" id="PTHR31001">
    <property type="entry name" value="UNCHARACTERIZED TRANSCRIPTIONAL REGULATORY PROTEIN"/>
    <property type="match status" value="1"/>
</dbReference>
<dbReference type="Pfam" id="PF04082">
    <property type="entry name" value="Fungal_trans"/>
    <property type="match status" value="1"/>
</dbReference>
<dbReference type="Pfam" id="PF00172">
    <property type="entry name" value="Zn_clus"/>
    <property type="match status" value="1"/>
</dbReference>
<dbReference type="SMART" id="SM00066">
    <property type="entry name" value="GAL4"/>
    <property type="match status" value="1"/>
</dbReference>
<dbReference type="SUPFAM" id="SSF57701">
    <property type="entry name" value="Zn2/Cys6 DNA-binding domain"/>
    <property type="match status" value="1"/>
</dbReference>
<dbReference type="PROSITE" id="PS00463">
    <property type="entry name" value="ZN2_CY6_FUNGAL_1"/>
    <property type="match status" value="1"/>
</dbReference>
<dbReference type="PROSITE" id="PS50048">
    <property type="entry name" value="ZN2_CY6_FUNGAL_2"/>
    <property type="match status" value="1"/>
</dbReference>
<gene>
    <name evidence="5" type="primary">AgnL11</name>
</gene>